<proteinExistence type="inferred from homology"/>
<accession>B2K9M1</accession>
<comment type="subunit">
    <text evidence="1">Part of a tripartite efflux system composed of MdtA, MdtB and MdtC. MdtC forms a heteromultimer with MdtB.</text>
</comment>
<comment type="subcellular location">
    <subcellularLocation>
        <location evidence="1">Cell inner membrane</location>
        <topology evidence="1">Multi-pass membrane protein</topology>
    </subcellularLocation>
</comment>
<comment type="similarity">
    <text evidence="1">Belongs to the resistance-nodulation-cell division (RND) (TC 2.A.6) family. MdtC subfamily.</text>
</comment>
<sequence length="1024" mass="110389">MKFFALFIQRPVATTLLTLAITLSGIIGFSLLPVSPLPQVDYPVIMVSASMPGADPETMASSVATPLERALGRIAGVNEMTSTSSLGSTRIILQFDLNRDINGAARDVQAALNAAQSLLPSGMPSRPTYRKMNPSDAPIMIMTLTSDTFSQGQLYDYASTKLAQKIAQTEGVSDVTVGGSSLPAVRVELNPSALFNQGVSLDAVRQAISAANVRRPQGSVDAAETHWQVQANDEIKTAEGYRPLIVHYNNGSPVRLQDVANVIDSVQDVRNAGMSAGQPAVLLVISREPGANIIATVDRIRAELPALRASIPASIQLNIAQDRSPTIRASLDEVERSLVIAVALVILVVFIFLRSGRATLIPAVAVPVSLIGTFAAMYLCGFSLNNLSLMALTIATGFVVDDAIVVLENISRHLEAGVKPMVAALRGVREVGFTVLSMSISLVAVFIPLLLMAGLPGRLFREFAVTLSVAIGISLVISLTLTPMMCAWLLRSHPKGQQQRIRGFGKVLLAIQQGYGRSLNWALSHTRWVMVVLLSTIALNVWLYISIPKTFFPEQDTGRMMGFIQADQSISFQSMQQKLKDFMQIVGADPAVDSVTGFTGGSRTNSGSMFISLKPLSERQETAQQVITRLRGKLAKEPGANLFLSSVQDIRVGGRHSNAAYQFTLLADDLAALREWEPKVRAALAKLPQLADVNSDQQDKGAEMALTYDRETMARLGIDVSEANALLNNAFGQRQISTIYQPLNQYKVVMEVAPEYTQDVSSLDKMFVINSNGQSIPLSYFAKWQPANAPLAVNHQGLSAASTISFNLPDGGSLSEATAAVERAMTELGVPSTVRGAFAGTAQVFQETLKSQLWLIMAAIATVYIVLGILYESYVHPLTILSTLPSAGVGALLALELFDAPFSLIALIGIMLLIGIVKKNAIMMVDFALDAQRNGNISAREAIFQASLLRFRPIIMTTLAALFGALPLVLSSGDGAELRQPLGITIVGGLVVSQLLTLYTTPVIYLYFDRLRNRFSKQPLMKLE</sequence>
<protein>
    <recommendedName>
        <fullName evidence="1">Multidrug resistance protein MdtC</fullName>
    </recommendedName>
    <alternativeName>
        <fullName evidence="1">Multidrug transporter MdtC</fullName>
    </alternativeName>
</protein>
<reference key="1">
    <citation type="submission" date="2008-04" db="EMBL/GenBank/DDBJ databases">
        <title>Complete sequence of Yersinia pseudotuberculosis PB1/+.</title>
        <authorList>
            <person name="Copeland A."/>
            <person name="Lucas S."/>
            <person name="Lapidus A."/>
            <person name="Glavina del Rio T."/>
            <person name="Dalin E."/>
            <person name="Tice H."/>
            <person name="Bruce D."/>
            <person name="Goodwin L."/>
            <person name="Pitluck S."/>
            <person name="Munk A.C."/>
            <person name="Brettin T."/>
            <person name="Detter J.C."/>
            <person name="Han C."/>
            <person name="Tapia R."/>
            <person name="Schmutz J."/>
            <person name="Larimer F."/>
            <person name="Land M."/>
            <person name="Hauser L."/>
            <person name="Challacombe J.F."/>
            <person name="Green L."/>
            <person name="Lindler L.E."/>
            <person name="Nikolich M.P."/>
            <person name="Richardson P."/>
        </authorList>
    </citation>
    <scope>NUCLEOTIDE SEQUENCE [LARGE SCALE GENOMIC DNA]</scope>
    <source>
        <strain>PB1/+</strain>
    </source>
</reference>
<feature type="chain" id="PRO_1000145686" description="Multidrug resistance protein MdtC">
    <location>
        <begin position="1"/>
        <end position="1024"/>
    </location>
</feature>
<feature type="transmembrane region" description="Helical" evidence="1">
    <location>
        <begin position="12"/>
        <end position="32"/>
    </location>
</feature>
<feature type="transmembrane region" description="Helical" evidence="1">
    <location>
        <begin position="333"/>
        <end position="353"/>
    </location>
</feature>
<feature type="transmembrane region" description="Helical" evidence="1">
    <location>
        <begin position="360"/>
        <end position="380"/>
    </location>
</feature>
<feature type="transmembrane region" description="Helical" evidence="1">
    <location>
        <begin position="387"/>
        <end position="407"/>
    </location>
</feature>
<feature type="transmembrane region" description="Helical" evidence="1">
    <location>
        <begin position="435"/>
        <end position="455"/>
    </location>
</feature>
<feature type="transmembrane region" description="Helical" evidence="1">
    <location>
        <begin position="469"/>
        <end position="489"/>
    </location>
</feature>
<feature type="transmembrane region" description="Helical" evidence="1">
    <location>
        <begin position="528"/>
        <end position="548"/>
    </location>
</feature>
<feature type="transmembrane region" description="Helical" evidence="1">
    <location>
        <begin position="853"/>
        <end position="873"/>
    </location>
</feature>
<feature type="transmembrane region" description="Helical" evidence="1">
    <location>
        <begin position="875"/>
        <end position="895"/>
    </location>
</feature>
<feature type="transmembrane region" description="Helical" evidence="1">
    <location>
        <begin position="897"/>
        <end position="917"/>
    </location>
</feature>
<feature type="transmembrane region" description="Helical" evidence="1">
    <location>
        <begin position="953"/>
        <end position="973"/>
    </location>
</feature>
<feature type="transmembrane region" description="Helical" evidence="1">
    <location>
        <begin position="984"/>
        <end position="1004"/>
    </location>
</feature>
<keyword id="KW-0997">Cell inner membrane</keyword>
<keyword id="KW-1003">Cell membrane</keyword>
<keyword id="KW-0472">Membrane</keyword>
<keyword id="KW-0812">Transmembrane</keyword>
<keyword id="KW-1133">Transmembrane helix</keyword>
<keyword id="KW-0813">Transport</keyword>
<gene>
    <name evidence="1" type="primary">mdtC</name>
    <name type="ordered locus">YPTS_2921</name>
</gene>
<name>MDTC_YERPB</name>
<evidence type="ECO:0000255" key="1">
    <source>
        <dbReference type="HAMAP-Rule" id="MF_01424"/>
    </source>
</evidence>
<dbReference type="EMBL" id="CP001048">
    <property type="protein sequence ID" value="ACC89878.1"/>
    <property type="molecule type" value="Genomic_DNA"/>
</dbReference>
<dbReference type="RefSeq" id="WP_012303861.1">
    <property type="nucleotide sequence ID" value="NZ_CP009780.1"/>
</dbReference>
<dbReference type="SMR" id="B2K9M1"/>
<dbReference type="KEGG" id="ypb:YPTS_2921"/>
<dbReference type="PATRIC" id="fig|502801.10.peg.2350"/>
<dbReference type="GO" id="GO:0005886">
    <property type="term" value="C:plasma membrane"/>
    <property type="evidence" value="ECO:0007669"/>
    <property type="project" value="UniProtKB-SubCell"/>
</dbReference>
<dbReference type="GO" id="GO:0042910">
    <property type="term" value="F:xenobiotic transmembrane transporter activity"/>
    <property type="evidence" value="ECO:0007669"/>
    <property type="project" value="TreeGrafter"/>
</dbReference>
<dbReference type="FunFam" id="1.20.1640.10:FF:000001">
    <property type="entry name" value="Efflux pump membrane transporter"/>
    <property type="match status" value="1"/>
</dbReference>
<dbReference type="FunFam" id="3.30.70.1430:FF:000001">
    <property type="entry name" value="Efflux pump membrane transporter"/>
    <property type="match status" value="1"/>
</dbReference>
<dbReference type="FunFam" id="3.30.2090.10:FF:000004">
    <property type="entry name" value="Multidrug resistance protein MdtC"/>
    <property type="match status" value="1"/>
</dbReference>
<dbReference type="Gene3D" id="3.30.70.1430">
    <property type="entry name" value="Multidrug efflux transporter AcrB pore domain"/>
    <property type="match status" value="2"/>
</dbReference>
<dbReference type="Gene3D" id="3.30.70.1440">
    <property type="entry name" value="Multidrug efflux transporter AcrB pore domain"/>
    <property type="match status" value="1"/>
</dbReference>
<dbReference type="Gene3D" id="3.30.70.1320">
    <property type="entry name" value="Multidrug efflux transporter AcrB pore domain like"/>
    <property type="match status" value="1"/>
</dbReference>
<dbReference type="Gene3D" id="3.30.2090.10">
    <property type="entry name" value="Multidrug efflux transporter AcrB TolC docking domain, DN and DC subdomains"/>
    <property type="match status" value="2"/>
</dbReference>
<dbReference type="Gene3D" id="1.20.1640.10">
    <property type="entry name" value="Multidrug efflux transporter AcrB transmembrane domain"/>
    <property type="match status" value="2"/>
</dbReference>
<dbReference type="HAMAP" id="MF_01424">
    <property type="entry name" value="MdtC"/>
    <property type="match status" value="1"/>
</dbReference>
<dbReference type="InterPro" id="IPR027463">
    <property type="entry name" value="AcrB_DN_DC_subdom"/>
</dbReference>
<dbReference type="InterPro" id="IPR001036">
    <property type="entry name" value="Acrflvin-R"/>
</dbReference>
<dbReference type="InterPro" id="IPR023931">
    <property type="entry name" value="Multidrug-R_MdtC"/>
</dbReference>
<dbReference type="NCBIfam" id="NF007905">
    <property type="entry name" value="PRK10614.1"/>
    <property type="match status" value="1"/>
</dbReference>
<dbReference type="NCBIfam" id="NF033617">
    <property type="entry name" value="RND_permease_2"/>
    <property type="match status" value="1"/>
</dbReference>
<dbReference type="PANTHER" id="PTHR32063">
    <property type="match status" value="1"/>
</dbReference>
<dbReference type="PANTHER" id="PTHR32063:SF34">
    <property type="entry name" value="MULTIDRUG RESISTANCE PROTEIN MDTC"/>
    <property type="match status" value="1"/>
</dbReference>
<dbReference type="Pfam" id="PF00873">
    <property type="entry name" value="ACR_tran"/>
    <property type="match status" value="1"/>
</dbReference>
<dbReference type="PRINTS" id="PR00702">
    <property type="entry name" value="ACRIFLAVINRP"/>
</dbReference>
<dbReference type="SUPFAM" id="SSF82693">
    <property type="entry name" value="Multidrug efflux transporter AcrB pore domain, PN1, PN2, PC1 and PC2 subdomains"/>
    <property type="match status" value="4"/>
</dbReference>
<dbReference type="SUPFAM" id="SSF82714">
    <property type="entry name" value="Multidrug efflux transporter AcrB TolC docking domain, DN and DC subdomains"/>
    <property type="match status" value="2"/>
</dbReference>
<dbReference type="SUPFAM" id="SSF82866">
    <property type="entry name" value="Multidrug efflux transporter AcrB transmembrane domain"/>
    <property type="match status" value="2"/>
</dbReference>
<organism>
    <name type="scientific">Yersinia pseudotuberculosis serotype IB (strain PB1/+)</name>
    <dbReference type="NCBI Taxonomy" id="502801"/>
    <lineage>
        <taxon>Bacteria</taxon>
        <taxon>Pseudomonadati</taxon>
        <taxon>Pseudomonadota</taxon>
        <taxon>Gammaproteobacteria</taxon>
        <taxon>Enterobacterales</taxon>
        <taxon>Yersiniaceae</taxon>
        <taxon>Yersinia</taxon>
    </lineage>
</organism>